<sequence length="459" mass="48225">MGKLFGTDGVRGVANSELTPELAFKLGRAGAYVLSKEAPQPRIVIGKDTRISGDMLEAALIAGITSVGGEALPVGVLPTPGIAYLTRKLKATAGVVISASHNPVADNGIKFFSASGFKLPDAVEEEIERYVLGEKGQSLDNVGGDAEGRHDDGLPAPTGALVGRVRPVADAETLFVEYLKSTVPVDFSGLKVVVDGANGAAYQVAPRILRELGAEVVTICCTPDGTNINDGCGSTHPEKLCEAVVAHGAHVGLAHDGDADRLIAVDEKGRIVDGDRIMVTCALHMKAKGQLPKDTVAVTVMSNMGLHLALKRAGIRILETKVGDRYVLEALLREGASFGGEQSGHILFLQHNTTGDGVLTGLQLLTVLKETGKPLSELAAQMEQLPQLLVNVRVKDKGCMNAPEAQAAVEAGKAKLAGRGRILVRPSGTEPLIRVMGEGPDPEELKQVVEAIADVFRRF</sequence>
<evidence type="ECO:0000255" key="1">
    <source>
        <dbReference type="HAMAP-Rule" id="MF_01554"/>
    </source>
</evidence>
<protein>
    <recommendedName>
        <fullName evidence="1">Phosphoglucosamine mutase</fullName>
        <ecNumber evidence="1">5.4.2.10</ecNumber>
    </recommendedName>
</protein>
<gene>
    <name evidence="1" type="primary">glmM</name>
    <name type="ordered locus">Helmi_14720</name>
    <name type="ORF">HM1_1525</name>
</gene>
<comment type="function">
    <text evidence="1">Catalyzes the conversion of glucosamine-6-phosphate to glucosamine-1-phosphate.</text>
</comment>
<comment type="catalytic activity">
    <reaction evidence="1">
        <text>alpha-D-glucosamine 1-phosphate = D-glucosamine 6-phosphate</text>
        <dbReference type="Rhea" id="RHEA:23424"/>
        <dbReference type="ChEBI" id="CHEBI:58516"/>
        <dbReference type="ChEBI" id="CHEBI:58725"/>
        <dbReference type="EC" id="5.4.2.10"/>
    </reaction>
</comment>
<comment type="cofactor">
    <cofactor evidence="1">
        <name>Mg(2+)</name>
        <dbReference type="ChEBI" id="CHEBI:18420"/>
    </cofactor>
    <text evidence="1">Binds 1 Mg(2+) ion per subunit.</text>
</comment>
<comment type="PTM">
    <text evidence="1">Activated by phosphorylation.</text>
</comment>
<comment type="similarity">
    <text evidence="1">Belongs to the phosphohexose mutase family.</text>
</comment>
<reference key="1">
    <citation type="journal article" date="2008" name="J. Bacteriol.">
        <title>The genome of Heliobacterium modesticaldum, a phototrophic representative of the Firmicutes containing the simplest photosynthetic apparatus.</title>
        <authorList>
            <person name="Sattley W.M."/>
            <person name="Madigan M.T."/>
            <person name="Swingley W.D."/>
            <person name="Cheung P.C."/>
            <person name="Clocksin K.M."/>
            <person name="Conrad A.L."/>
            <person name="Dejesa L.C."/>
            <person name="Honchak B.M."/>
            <person name="Jung D.O."/>
            <person name="Karbach L.E."/>
            <person name="Kurdoglu A."/>
            <person name="Lahiri S."/>
            <person name="Mastrian S.D."/>
            <person name="Page L.E."/>
            <person name="Taylor H.L."/>
            <person name="Wang Z.T."/>
            <person name="Raymond J."/>
            <person name="Chen M."/>
            <person name="Blankenship R.E."/>
            <person name="Touchman J.W."/>
        </authorList>
    </citation>
    <scope>NUCLEOTIDE SEQUENCE [LARGE SCALE GENOMIC DNA]</scope>
    <source>
        <strain>ATCC 51547 / Ice1</strain>
    </source>
</reference>
<accession>B0TCS1</accession>
<name>GLMM_HELMI</name>
<dbReference type="EC" id="5.4.2.10" evidence="1"/>
<dbReference type="EMBL" id="CP000930">
    <property type="protein sequence ID" value="ABZ84097.1"/>
    <property type="molecule type" value="Genomic_DNA"/>
</dbReference>
<dbReference type="RefSeq" id="WP_012282611.1">
    <property type="nucleotide sequence ID" value="NC_010337.2"/>
</dbReference>
<dbReference type="SMR" id="B0TCS1"/>
<dbReference type="STRING" id="498761.HM1_1525"/>
<dbReference type="KEGG" id="hmo:HM1_1525"/>
<dbReference type="eggNOG" id="COG1109">
    <property type="taxonomic scope" value="Bacteria"/>
</dbReference>
<dbReference type="HOGENOM" id="CLU_016950_7_0_9"/>
<dbReference type="OrthoDB" id="9806956at2"/>
<dbReference type="Proteomes" id="UP000008550">
    <property type="component" value="Chromosome"/>
</dbReference>
<dbReference type="GO" id="GO:0005829">
    <property type="term" value="C:cytosol"/>
    <property type="evidence" value="ECO:0007669"/>
    <property type="project" value="TreeGrafter"/>
</dbReference>
<dbReference type="GO" id="GO:0000287">
    <property type="term" value="F:magnesium ion binding"/>
    <property type="evidence" value="ECO:0007669"/>
    <property type="project" value="UniProtKB-UniRule"/>
</dbReference>
<dbReference type="GO" id="GO:0008966">
    <property type="term" value="F:phosphoglucosamine mutase activity"/>
    <property type="evidence" value="ECO:0007669"/>
    <property type="project" value="UniProtKB-UniRule"/>
</dbReference>
<dbReference type="GO" id="GO:0004615">
    <property type="term" value="F:phosphomannomutase activity"/>
    <property type="evidence" value="ECO:0007669"/>
    <property type="project" value="TreeGrafter"/>
</dbReference>
<dbReference type="GO" id="GO:0005975">
    <property type="term" value="P:carbohydrate metabolic process"/>
    <property type="evidence" value="ECO:0007669"/>
    <property type="project" value="InterPro"/>
</dbReference>
<dbReference type="GO" id="GO:0009252">
    <property type="term" value="P:peptidoglycan biosynthetic process"/>
    <property type="evidence" value="ECO:0007669"/>
    <property type="project" value="TreeGrafter"/>
</dbReference>
<dbReference type="GO" id="GO:0006048">
    <property type="term" value="P:UDP-N-acetylglucosamine biosynthetic process"/>
    <property type="evidence" value="ECO:0007669"/>
    <property type="project" value="TreeGrafter"/>
</dbReference>
<dbReference type="CDD" id="cd05802">
    <property type="entry name" value="GlmM"/>
    <property type="match status" value="1"/>
</dbReference>
<dbReference type="FunFam" id="3.30.310.50:FF:000001">
    <property type="entry name" value="Phosphoglucosamine mutase"/>
    <property type="match status" value="1"/>
</dbReference>
<dbReference type="FunFam" id="3.40.120.10:FF:000001">
    <property type="entry name" value="Phosphoglucosamine mutase"/>
    <property type="match status" value="1"/>
</dbReference>
<dbReference type="FunFam" id="3.40.120.10:FF:000003">
    <property type="entry name" value="Phosphoglucosamine mutase"/>
    <property type="match status" value="1"/>
</dbReference>
<dbReference type="Gene3D" id="3.40.120.10">
    <property type="entry name" value="Alpha-D-Glucose-1,6-Bisphosphate, subunit A, domain 3"/>
    <property type="match status" value="3"/>
</dbReference>
<dbReference type="Gene3D" id="3.30.310.50">
    <property type="entry name" value="Alpha-D-phosphohexomutase, C-terminal domain"/>
    <property type="match status" value="1"/>
</dbReference>
<dbReference type="HAMAP" id="MF_01554_B">
    <property type="entry name" value="GlmM_B"/>
    <property type="match status" value="1"/>
</dbReference>
<dbReference type="InterPro" id="IPR005844">
    <property type="entry name" value="A-D-PHexomutase_a/b/a-I"/>
</dbReference>
<dbReference type="InterPro" id="IPR016055">
    <property type="entry name" value="A-D-PHexomutase_a/b/a-I/II/III"/>
</dbReference>
<dbReference type="InterPro" id="IPR005845">
    <property type="entry name" value="A-D-PHexomutase_a/b/a-II"/>
</dbReference>
<dbReference type="InterPro" id="IPR005846">
    <property type="entry name" value="A-D-PHexomutase_a/b/a-III"/>
</dbReference>
<dbReference type="InterPro" id="IPR005843">
    <property type="entry name" value="A-D-PHexomutase_C"/>
</dbReference>
<dbReference type="InterPro" id="IPR036900">
    <property type="entry name" value="A-D-PHexomutase_C_sf"/>
</dbReference>
<dbReference type="InterPro" id="IPR016066">
    <property type="entry name" value="A-D-PHexomutase_CS"/>
</dbReference>
<dbReference type="InterPro" id="IPR005841">
    <property type="entry name" value="Alpha-D-phosphohexomutase_SF"/>
</dbReference>
<dbReference type="InterPro" id="IPR006352">
    <property type="entry name" value="GlmM_bact"/>
</dbReference>
<dbReference type="InterPro" id="IPR050060">
    <property type="entry name" value="Phosphoglucosamine_mutase"/>
</dbReference>
<dbReference type="NCBIfam" id="TIGR01455">
    <property type="entry name" value="glmM"/>
    <property type="match status" value="1"/>
</dbReference>
<dbReference type="NCBIfam" id="NF008139">
    <property type="entry name" value="PRK10887.1"/>
    <property type="match status" value="1"/>
</dbReference>
<dbReference type="PANTHER" id="PTHR42946:SF1">
    <property type="entry name" value="PHOSPHOGLUCOMUTASE (ALPHA-D-GLUCOSE-1,6-BISPHOSPHATE-DEPENDENT)"/>
    <property type="match status" value="1"/>
</dbReference>
<dbReference type="PANTHER" id="PTHR42946">
    <property type="entry name" value="PHOSPHOHEXOSE MUTASE"/>
    <property type="match status" value="1"/>
</dbReference>
<dbReference type="Pfam" id="PF02878">
    <property type="entry name" value="PGM_PMM_I"/>
    <property type="match status" value="1"/>
</dbReference>
<dbReference type="Pfam" id="PF02879">
    <property type="entry name" value="PGM_PMM_II"/>
    <property type="match status" value="1"/>
</dbReference>
<dbReference type="Pfam" id="PF02880">
    <property type="entry name" value="PGM_PMM_III"/>
    <property type="match status" value="1"/>
</dbReference>
<dbReference type="Pfam" id="PF00408">
    <property type="entry name" value="PGM_PMM_IV"/>
    <property type="match status" value="1"/>
</dbReference>
<dbReference type="PRINTS" id="PR00509">
    <property type="entry name" value="PGMPMM"/>
</dbReference>
<dbReference type="SUPFAM" id="SSF55957">
    <property type="entry name" value="Phosphoglucomutase, C-terminal domain"/>
    <property type="match status" value="1"/>
</dbReference>
<dbReference type="SUPFAM" id="SSF53738">
    <property type="entry name" value="Phosphoglucomutase, first 3 domains"/>
    <property type="match status" value="3"/>
</dbReference>
<dbReference type="PROSITE" id="PS00710">
    <property type="entry name" value="PGM_PMM"/>
    <property type="match status" value="1"/>
</dbReference>
<keyword id="KW-0413">Isomerase</keyword>
<keyword id="KW-0460">Magnesium</keyword>
<keyword id="KW-0479">Metal-binding</keyword>
<keyword id="KW-0597">Phosphoprotein</keyword>
<keyword id="KW-1185">Reference proteome</keyword>
<proteinExistence type="inferred from homology"/>
<organism>
    <name type="scientific">Heliobacterium modesticaldum (strain ATCC 51547 / Ice1)</name>
    <dbReference type="NCBI Taxonomy" id="498761"/>
    <lineage>
        <taxon>Bacteria</taxon>
        <taxon>Bacillati</taxon>
        <taxon>Bacillota</taxon>
        <taxon>Clostridia</taxon>
        <taxon>Eubacteriales</taxon>
        <taxon>Heliobacteriaceae</taxon>
        <taxon>Heliomicrobium</taxon>
    </lineage>
</organism>
<feature type="chain" id="PRO_1000201109" description="Phosphoglucosamine mutase">
    <location>
        <begin position="1"/>
        <end position="459"/>
    </location>
</feature>
<feature type="active site" description="Phosphoserine intermediate" evidence="1">
    <location>
        <position position="100"/>
    </location>
</feature>
<feature type="binding site" description="via phosphate group" evidence="1">
    <location>
        <position position="100"/>
    </location>
    <ligand>
        <name>Mg(2+)</name>
        <dbReference type="ChEBI" id="CHEBI:18420"/>
    </ligand>
</feature>
<feature type="binding site" evidence="1">
    <location>
        <position position="256"/>
    </location>
    <ligand>
        <name>Mg(2+)</name>
        <dbReference type="ChEBI" id="CHEBI:18420"/>
    </ligand>
</feature>
<feature type="binding site" evidence="1">
    <location>
        <position position="258"/>
    </location>
    <ligand>
        <name>Mg(2+)</name>
        <dbReference type="ChEBI" id="CHEBI:18420"/>
    </ligand>
</feature>
<feature type="binding site" evidence="1">
    <location>
        <position position="260"/>
    </location>
    <ligand>
        <name>Mg(2+)</name>
        <dbReference type="ChEBI" id="CHEBI:18420"/>
    </ligand>
</feature>
<feature type="modified residue" description="Phosphoserine" evidence="1">
    <location>
        <position position="100"/>
    </location>
</feature>